<protein>
    <recommendedName>
        <fullName>Pantothenate kinase</fullName>
        <ecNumber>2.7.1.33</ecNumber>
    </recommendedName>
    <alternativeName>
        <fullName>Pantothenic acid kinase</fullName>
    </alternativeName>
</protein>
<dbReference type="EC" id="2.7.1.33"/>
<dbReference type="EMBL" id="AL591977">
    <property type="protein sequence ID" value="CAC99000.1"/>
    <property type="molecule type" value="Genomic_DNA"/>
</dbReference>
<dbReference type="PIR" id="AB1190">
    <property type="entry name" value="AB1190"/>
</dbReference>
<dbReference type="RefSeq" id="NP_464448.1">
    <property type="nucleotide sequence ID" value="NC_003210.1"/>
</dbReference>
<dbReference type="RefSeq" id="WP_003721490.1">
    <property type="nucleotide sequence ID" value="NZ_CP149495.1"/>
</dbReference>
<dbReference type="SMR" id="Q8Y8I0"/>
<dbReference type="STRING" id="169963.gene:17593577"/>
<dbReference type="PaxDb" id="169963-lmo0922"/>
<dbReference type="EnsemblBacteria" id="CAC99000">
    <property type="protein sequence ID" value="CAC99000"/>
    <property type="gene ID" value="CAC99000"/>
</dbReference>
<dbReference type="GeneID" id="986345"/>
<dbReference type="KEGG" id="lmo:lmo0922"/>
<dbReference type="PATRIC" id="fig|169963.11.peg.948"/>
<dbReference type="eggNOG" id="COG1072">
    <property type="taxonomic scope" value="Bacteria"/>
</dbReference>
<dbReference type="HOGENOM" id="CLU_053818_1_1_9"/>
<dbReference type="OrthoDB" id="1550976at2"/>
<dbReference type="PhylomeDB" id="Q8Y8I0"/>
<dbReference type="BioCyc" id="LMON169963:LMO0922-MONOMER"/>
<dbReference type="UniPathway" id="UPA00241">
    <property type="reaction ID" value="UER00352"/>
</dbReference>
<dbReference type="Proteomes" id="UP000000817">
    <property type="component" value="Chromosome"/>
</dbReference>
<dbReference type="GO" id="GO:0005737">
    <property type="term" value="C:cytoplasm"/>
    <property type="evidence" value="ECO:0000318"/>
    <property type="project" value="GO_Central"/>
</dbReference>
<dbReference type="GO" id="GO:0005524">
    <property type="term" value="F:ATP binding"/>
    <property type="evidence" value="ECO:0007669"/>
    <property type="project" value="UniProtKB-UniRule"/>
</dbReference>
<dbReference type="GO" id="GO:0004594">
    <property type="term" value="F:pantothenate kinase activity"/>
    <property type="evidence" value="ECO:0000318"/>
    <property type="project" value="GO_Central"/>
</dbReference>
<dbReference type="GO" id="GO:0015937">
    <property type="term" value="P:coenzyme A biosynthetic process"/>
    <property type="evidence" value="ECO:0000318"/>
    <property type="project" value="GO_Central"/>
</dbReference>
<dbReference type="CDD" id="cd02025">
    <property type="entry name" value="PanK"/>
    <property type="match status" value="1"/>
</dbReference>
<dbReference type="FunFam" id="3.40.50.300:FF:001878">
    <property type="entry name" value="Pantothenate kinase"/>
    <property type="match status" value="1"/>
</dbReference>
<dbReference type="Gene3D" id="3.40.50.300">
    <property type="entry name" value="P-loop containing nucleotide triphosphate hydrolases"/>
    <property type="match status" value="1"/>
</dbReference>
<dbReference type="HAMAP" id="MF_00215">
    <property type="entry name" value="Pantothen_kinase_1"/>
    <property type="match status" value="1"/>
</dbReference>
<dbReference type="InterPro" id="IPR027417">
    <property type="entry name" value="P-loop_NTPase"/>
</dbReference>
<dbReference type="InterPro" id="IPR004566">
    <property type="entry name" value="PanK"/>
</dbReference>
<dbReference type="InterPro" id="IPR006083">
    <property type="entry name" value="PRK/URK"/>
</dbReference>
<dbReference type="NCBIfam" id="TIGR00554">
    <property type="entry name" value="panK_bact"/>
    <property type="match status" value="1"/>
</dbReference>
<dbReference type="PANTHER" id="PTHR10285">
    <property type="entry name" value="URIDINE KINASE"/>
    <property type="match status" value="1"/>
</dbReference>
<dbReference type="Pfam" id="PF00485">
    <property type="entry name" value="PRK"/>
    <property type="match status" value="1"/>
</dbReference>
<dbReference type="PIRSF" id="PIRSF000545">
    <property type="entry name" value="Pantothenate_kin"/>
    <property type="match status" value="1"/>
</dbReference>
<dbReference type="SUPFAM" id="SSF52540">
    <property type="entry name" value="P-loop containing nucleoside triphosphate hydrolases"/>
    <property type="match status" value="1"/>
</dbReference>
<feature type="chain" id="PRO_0000194437" description="Pantothenate kinase">
    <location>
        <begin position="1"/>
        <end position="306"/>
    </location>
</feature>
<feature type="binding site" evidence="2">
    <location>
        <begin position="90"/>
        <end position="97"/>
    </location>
    <ligand>
        <name>ATP</name>
        <dbReference type="ChEBI" id="CHEBI:30616"/>
    </ligand>
</feature>
<gene>
    <name type="primary">coaA</name>
    <name type="ordered locus">lmo0922</name>
</gene>
<evidence type="ECO:0000250" key="1"/>
<evidence type="ECO:0000255" key="2"/>
<evidence type="ECO:0000305" key="3"/>
<accession>Q8Y8I0</accession>
<reference key="1">
    <citation type="journal article" date="2001" name="Science">
        <title>Comparative genomics of Listeria species.</title>
        <authorList>
            <person name="Glaser P."/>
            <person name="Frangeul L."/>
            <person name="Buchrieser C."/>
            <person name="Rusniok C."/>
            <person name="Amend A."/>
            <person name="Baquero F."/>
            <person name="Berche P."/>
            <person name="Bloecker H."/>
            <person name="Brandt P."/>
            <person name="Chakraborty T."/>
            <person name="Charbit A."/>
            <person name="Chetouani F."/>
            <person name="Couve E."/>
            <person name="de Daruvar A."/>
            <person name="Dehoux P."/>
            <person name="Domann E."/>
            <person name="Dominguez-Bernal G."/>
            <person name="Duchaud E."/>
            <person name="Durant L."/>
            <person name="Dussurget O."/>
            <person name="Entian K.-D."/>
            <person name="Fsihi H."/>
            <person name="Garcia-del Portillo F."/>
            <person name="Garrido P."/>
            <person name="Gautier L."/>
            <person name="Goebel W."/>
            <person name="Gomez-Lopez N."/>
            <person name="Hain T."/>
            <person name="Hauf J."/>
            <person name="Jackson D."/>
            <person name="Jones L.-M."/>
            <person name="Kaerst U."/>
            <person name="Kreft J."/>
            <person name="Kuhn M."/>
            <person name="Kunst F."/>
            <person name="Kurapkat G."/>
            <person name="Madueno E."/>
            <person name="Maitournam A."/>
            <person name="Mata Vicente J."/>
            <person name="Ng E."/>
            <person name="Nedjari H."/>
            <person name="Nordsiek G."/>
            <person name="Novella S."/>
            <person name="de Pablos B."/>
            <person name="Perez-Diaz J.-C."/>
            <person name="Purcell R."/>
            <person name="Remmel B."/>
            <person name="Rose M."/>
            <person name="Schlueter T."/>
            <person name="Simoes N."/>
            <person name="Tierrez A."/>
            <person name="Vazquez-Boland J.-A."/>
            <person name="Voss H."/>
            <person name="Wehland J."/>
            <person name="Cossart P."/>
        </authorList>
    </citation>
    <scope>NUCLEOTIDE SEQUENCE [LARGE SCALE GENOMIC DNA]</scope>
    <source>
        <strain>ATCC BAA-679 / EGD-e</strain>
    </source>
</reference>
<keyword id="KW-0067">ATP-binding</keyword>
<keyword id="KW-0173">Coenzyme A biosynthesis</keyword>
<keyword id="KW-0963">Cytoplasm</keyword>
<keyword id="KW-0418">Kinase</keyword>
<keyword id="KW-0547">Nucleotide-binding</keyword>
<keyword id="KW-1185">Reference proteome</keyword>
<keyword id="KW-0808">Transferase</keyword>
<organism>
    <name type="scientific">Listeria monocytogenes serovar 1/2a (strain ATCC BAA-679 / EGD-e)</name>
    <dbReference type="NCBI Taxonomy" id="169963"/>
    <lineage>
        <taxon>Bacteria</taxon>
        <taxon>Bacillati</taxon>
        <taxon>Bacillota</taxon>
        <taxon>Bacilli</taxon>
        <taxon>Bacillales</taxon>
        <taxon>Listeriaceae</taxon>
        <taxon>Listeria</taxon>
    </lineage>
</organism>
<proteinExistence type="inferred from homology"/>
<comment type="catalytic activity">
    <reaction>
        <text>(R)-pantothenate + ATP = (R)-4'-phosphopantothenate + ADP + H(+)</text>
        <dbReference type="Rhea" id="RHEA:16373"/>
        <dbReference type="ChEBI" id="CHEBI:10986"/>
        <dbReference type="ChEBI" id="CHEBI:15378"/>
        <dbReference type="ChEBI" id="CHEBI:29032"/>
        <dbReference type="ChEBI" id="CHEBI:30616"/>
        <dbReference type="ChEBI" id="CHEBI:456216"/>
        <dbReference type="EC" id="2.7.1.33"/>
    </reaction>
</comment>
<comment type="pathway">
    <text>Cofactor biosynthesis; coenzyme A biosynthesis; CoA from (R)-pantothenate: step 1/5.</text>
</comment>
<comment type="subcellular location">
    <subcellularLocation>
        <location evidence="1">Cytoplasm</location>
    </subcellularLocation>
</comment>
<comment type="similarity">
    <text evidence="3">Belongs to the prokaryotic pantothenate kinase family.</text>
</comment>
<name>COAA_LISMO</name>
<sequence length="306" mass="36110">MNDYNHYFHFPREEWRKLEVSKDQILTAEELEEIRGLNDRISLQDISEIYLPLIKLIAIQYHEAIFIHGEKMEYLKKKESRAPFIIALAGSVAVGKSTTARVFKLMLDRWFSKTRQVELVTTDGFLYPNKVLEERGIMDKKGFPESYDRDRFAKFLTDLKANKEDVEIPLYSHFTYDVLDETRVIHNPDIVIIEGINVLQADQHESLFPSDFFDFSVYMDANEADIKKWYLERFFMLRETAFQDESSYFHPYTKISKQEAETFALGVWDTINGVNLKENIEKTKYRADLVLQKGTDHLISDIYLRK</sequence>